<gene>
    <name evidence="5" type="primary">SIDDA</name>
    <name type="ORF">BBA_06997</name>
</gene>
<accession>J4UJF5</accession>
<comment type="function">
    <text evidence="4">Nonribosomal peptide synthetase; part of the gene cluster that mediates the biosynthesis of at least 11 siderophores, including beauverichelin A, dimerumic acid (DA), Na-dimethyl coprogen (NADC), eleutherazine B, ferricrocin (FC), fusarinine A, fusarinine C (FsC), metachelin A, mevalonolactone, rhodotorulic acid (RA) and tenellin (PubMed:39109629). This cocktail of siderophores for iron metabolism is essential for virulence, and more specifically for the fungal virulence in penetrating through the host cuticle (PubMed:39109629). Siderophore synthesis is also involved in conidial germination under iron-deficient conditions (PubMed:39109629). SIDC catalyzes the assembly of ferricrocin whereas SIDD catalyzes the assembly of fusarinine C (PubMed:39109629).</text>
</comment>
<comment type="cofactor">
    <cofactor evidence="2">
        <name>pantetheine 4'-phosphate</name>
        <dbReference type="ChEBI" id="CHEBI:47942"/>
    </cofactor>
</comment>
<comment type="pathway">
    <text evidence="4">Siderophore biosynthesis.</text>
</comment>
<comment type="domain">
    <text evidence="7">NRP synthetases are composed of discrete domains (adenylation (A), thiolation (T) or peptidyl carrier protein (PCP) and condensation (C) domains) which when grouped together are referred to as a single module. Each module is responsible for the recognition (via the A domain) and incorporation of a single amino acid into the growing peptide product. Thus, an NRP synthetase is generally composed of one or more modules and can terminate in a thioesterase domain (TE) that releases the newly synthesized peptide from the enzyme. Occasionally, epimerase (E) domains (responsible for L- to D- amino acid conversion) are present within the NRP synthetase. SIDD has the following architecture: A-T-C-T-C.</text>
</comment>
<comment type="disruption phenotype">
    <text evidence="4">Leads to increased sensitivity to oxidative stress and iron-starvation, reduced conidial germination as well as reduced virulence (PubMed:39109629). Impairs the production of the 6 siderophores beauverichelin A, dimerumic acid (DA), Na-dimethyl coprogen (NADC), fusarinine A, fusarinine C (FsC), rhodotorulic acid (RA) and tenellin; but increases the production of mevalonolactone and eleutherazine B (PubMed:39109629).</text>
</comment>
<comment type="similarity">
    <text evidence="6">Belongs to the NRP synthetase family.</text>
</comment>
<keyword id="KW-0436">Ligase</keyword>
<keyword id="KW-0596">Phosphopantetheine</keyword>
<keyword id="KW-0597">Phosphoprotein</keyword>
<keyword id="KW-1185">Reference proteome</keyword>
<keyword id="KW-0677">Repeat</keyword>
<keyword id="KW-0843">Virulence</keyword>
<reference key="1">
    <citation type="journal article" date="2012" name="Sci. Rep.">
        <title>Genomic perspectives on the evolution of fungal entomopathogenicity in Beauveria bassiana.</title>
        <authorList>
            <person name="Xiao G."/>
            <person name="Ying S.-H."/>
            <person name="Zheng P."/>
            <person name="Wang Z.-L."/>
            <person name="Zhang S."/>
            <person name="Xie X.-Q."/>
            <person name="Shang Y."/>
            <person name="St Leger R.J."/>
            <person name="Zhao G.-P."/>
            <person name="Wang C."/>
            <person name="Feng M.-G."/>
        </authorList>
    </citation>
    <scope>NUCLEOTIDE SEQUENCE [LARGE SCALE GENOMIC DNA]</scope>
    <source>
        <strain>ARSEF 2860</strain>
    </source>
</reference>
<reference key="2">
    <citation type="journal article" date="2024" name="J. Agric. Food Chem.">
        <title>Unlocking the siderophore biosynthesis pathway and its biological functions in the fungal insect pathogen Beauveria bassiana.</title>
        <authorList>
            <person name="Sun T.F."/>
            <person name="Ge Z.W."/>
            <person name="Xu H.R."/>
            <person name="Zhang H."/>
            <person name="Huang S.S."/>
            <person name="Feng M.G."/>
            <person name="Ying S.H."/>
        </authorList>
    </citation>
    <scope>FUNCTION</scope>
    <scope>DISRUPTION PHENOTYPE</scope>
    <scope>PATHWAY</scope>
</reference>
<name>SIDD_BEAB2</name>
<evidence type="ECO:0000255" key="1"/>
<evidence type="ECO:0000255" key="2">
    <source>
        <dbReference type="PROSITE-ProRule" id="PRU00258"/>
    </source>
</evidence>
<evidence type="ECO:0000256" key="3">
    <source>
        <dbReference type="SAM" id="MobiDB-lite"/>
    </source>
</evidence>
<evidence type="ECO:0000269" key="4">
    <source>
    </source>
</evidence>
<evidence type="ECO:0000303" key="5">
    <source>
    </source>
</evidence>
<evidence type="ECO:0000305" key="6"/>
<evidence type="ECO:0000305" key="7">
    <source>
    </source>
</evidence>
<organism>
    <name type="scientific">Beauveria bassiana (strain ARSEF 2860)</name>
    <name type="common">White muscardine disease fungus</name>
    <name type="synonym">Tritirachium shiotae</name>
    <dbReference type="NCBI Taxonomy" id="655819"/>
    <lineage>
        <taxon>Eukaryota</taxon>
        <taxon>Fungi</taxon>
        <taxon>Dikarya</taxon>
        <taxon>Ascomycota</taxon>
        <taxon>Pezizomycotina</taxon>
        <taxon>Sordariomycetes</taxon>
        <taxon>Hypocreomycetidae</taxon>
        <taxon>Hypocreales</taxon>
        <taxon>Cordycipitaceae</taxon>
        <taxon>Beauveria</taxon>
    </lineage>
</organism>
<feature type="chain" id="PRO_0000461396" description="Nonribosomal peptide synthetase SIDD">
    <location>
        <begin position="1"/>
        <end position="1843"/>
    </location>
</feature>
<feature type="domain" description="Carrier 1" evidence="2">
    <location>
        <begin position="641"/>
        <end position="716"/>
    </location>
</feature>
<feature type="domain" description="Carrier 2" evidence="2">
    <location>
        <begin position="1289"/>
        <end position="1365"/>
    </location>
</feature>
<feature type="region of interest" description="Disordered" evidence="3">
    <location>
        <begin position="1"/>
        <end position="83"/>
    </location>
</feature>
<feature type="region of interest" description="Adenylation 1" evidence="1 7">
    <location>
        <begin position="133"/>
        <end position="528"/>
    </location>
</feature>
<feature type="region of interest" description="Disordered" evidence="3">
    <location>
        <begin position="628"/>
        <end position="647"/>
    </location>
</feature>
<feature type="region of interest" description="Condensation 1" evidence="1 7">
    <location>
        <begin position="753"/>
        <end position="1175"/>
    </location>
</feature>
<feature type="region of interest" description="Condensation 2" evidence="1 7">
    <location>
        <begin position="1447"/>
        <end position="1734"/>
    </location>
</feature>
<feature type="compositionally biased region" description="Low complexity" evidence="3">
    <location>
        <begin position="65"/>
        <end position="81"/>
    </location>
</feature>
<feature type="modified residue" description="O-(pantetheine 4'-phosphoryl)serine" evidence="2">
    <location>
        <position position="677"/>
    </location>
</feature>
<feature type="modified residue" description="O-(pantetheine 4'-phosphoryl)serine" evidence="2">
    <location>
        <position position="1326"/>
    </location>
</feature>
<dbReference type="EC" id="6.3.2.-" evidence="7"/>
<dbReference type="EMBL" id="JH725171">
    <property type="protein sequence ID" value="EJP63992.1"/>
    <property type="molecule type" value="Genomic_DNA"/>
</dbReference>
<dbReference type="RefSeq" id="XP_008600316.1">
    <property type="nucleotide sequence ID" value="XM_008602094.1"/>
</dbReference>
<dbReference type="SMR" id="J4UJF5"/>
<dbReference type="STRING" id="655819.J4UJF5"/>
<dbReference type="GeneID" id="19890009"/>
<dbReference type="HOGENOM" id="CLU_000022_60_2_1"/>
<dbReference type="InParanoid" id="J4UJF5"/>
<dbReference type="OrthoDB" id="4965at474943"/>
<dbReference type="Proteomes" id="UP000002762">
    <property type="component" value="Unassembled WGS sequence"/>
</dbReference>
<dbReference type="GO" id="GO:0005737">
    <property type="term" value="C:cytoplasm"/>
    <property type="evidence" value="ECO:0007669"/>
    <property type="project" value="TreeGrafter"/>
</dbReference>
<dbReference type="GO" id="GO:0016874">
    <property type="term" value="F:ligase activity"/>
    <property type="evidence" value="ECO:0007669"/>
    <property type="project" value="UniProtKB-KW"/>
</dbReference>
<dbReference type="GO" id="GO:0031177">
    <property type="term" value="F:phosphopantetheine binding"/>
    <property type="evidence" value="ECO:0007669"/>
    <property type="project" value="InterPro"/>
</dbReference>
<dbReference type="GO" id="GO:0043041">
    <property type="term" value="P:amino acid activation for nonribosomal peptide biosynthetic process"/>
    <property type="evidence" value="ECO:0007669"/>
    <property type="project" value="TreeGrafter"/>
</dbReference>
<dbReference type="GO" id="GO:0044550">
    <property type="term" value="P:secondary metabolite biosynthetic process"/>
    <property type="evidence" value="ECO:0007669"/>
    <property type="project" value="TreeGrafter"/>
</dbReference>
<dbReference type="CDD" id="cd05918">
    <property type="entry name" value="A_NRPS_SidN3_like"/>
    <property type="match status" value="1"/>
</dbReference>
<dbReference type="CDD" id="cd19542">
    <property type="entry name" value="CT_NRPS-like"/>
    <property type="match status" value="1"/>
</dbReference>
<dbReference type="CDD" id="cd19545">
    <property type="entry name" value="FUM14_C_NRPS-like"/>
    <property type="match status" value="1"/>
</dbReference>
<dbReference type="FunFam" id="3.30.300.30:FF:000015">
    <property type="entry name" value="Nonribosomal peptide synthase SidD"/>
    <property type="match status" value="1"/>
</dbReference>
<dbReference type="FunFam" id="3.30.559.30:FF:000003">
    <property type="entry name" value="Nonribosomal peptide synthase SidD"/>
    <property type="match status" value="1"/>
</dbReference>
<dbReference type="FunFam" id="1.10.1200.10:FF:000005">
    <property type="entry name" value="Nonribosomal peptide synthetase 1"/>
    <property type="match status" value="2"/>
</dbReference>
<dbReference type="FunFam" id="3.40.50.12780:FF:000014">
    <property type="entry name" value="Nonribosomal peptide synthetase 1"/>
    <property type="match status" value="1"/>
</dbReference>
<dbReference type="Gene3D" id="3.30.300.30">
    <property type="match status" value="1"/>
</dbReference>
<dbReference type="Gene3D" id="1.10.1200.10">
    <property type="entry name" value="ACP-like"/>
    <property type="match status" value="2"/>
</dbReference>
<dbReference type="Gene3D" id="3.30.559.10">
    <property type="entry name" value="Chloramphenicol acetyltransferase-like domain"/>
    <property type="match status" value="2"/>
</dbReference>
<dbReference type="Gene3D" id="3.40.50.12780">
    <property type="entry name" value="N-terminal domain of ligase-like"/>
    <property type="match status" value="1"/>
</dbReference>
<dbReference type="Gene3D" id="3.30.559.30">
    <property type="entry name" value="Nonribosomal peptide synthetase, condensation domain"/>
    <property type="match status" value="2"/>
</dbReference>
<dbReference type="InterPro" id="IPR010071">
    <property type="entry name" value="AA_adenyl_dom"/>
</dbReference>
<dbReference type="InterPro" id="IPR036736">
    <property type="entry name" value="ACP-like_sf"/>
</dbReference>
<dbReference type="InterPro" id="IPR045851">
    <property type="entry name" value="AMP-bd_C_sf"/>
</dbReference>
<dbReference type="InterPro" id="IPR020845">
    <property type="entry name" value="AMP-binding_CS"/>
</dbReference>
<dbReference type="InterPro" id="IPR000873">
    <property type="entry name" value="AMP-dep_synth/lig_dom"/>
</dbReference>
<dbReference type="InterPro" id="IPR042099">
    <property type="entry name" value="ANL_N_sf"/>
</dbReference>
<dbReference type="InterPro" id="IPR023213">
    <property type="entry name" value="CAT-like_dom_sf"/>
</dbReference>
<dbReference type="InterPro" id="IPR001242">
    <property type="entry name" value="Condensatn"/>
</dbReference>
<dbReference type="InterPro" id="IPR020806">
    <property type="entry name" value="PKS_PP-bd"/>
</dbReference>
<dbReference type="InterPro" id="IPR009081">
    <property type="entry name" value="PP-bd_ACP"/>
</dbReference>
<dbReference type="InterPro" id="IPR006162">
    <property type="entry name" value="Ppantetheine_attach_site"/>
</dbReference>
<dbReference type="NCBIfam" id="TIGR01733">
    <property type="entry name" value="AA-adenyl-dom"/>
    <property type="match status" value="1"/>
</dbReference>
<dbReference type="PANTHER" id="PTHR45527:SF1">
    <property type="entry name" value="FATTY ACID SYNTHASE"/>
    <property type="match status" value="1"/>
</dbReference>
<dbReference type="PANTHER" id="PTHR45527">
    <property type="entry name" value="NONRIBOSOMAL PEPTIDE SYNTHETASE"/>
    <property type="match status" value="1"/>
</dbReference>
<dbReference type="Pfam" id="PF00501">
    <property type="entry name" value="AMP-binding"/>
    <property type="match status" value="1"/>
</dbReference>
<dbReference type="Pfam" id="PF00668">
    <property type="entry name" value="Condensation"/>
    <property type="match status" value="2"/>
</dbReference>
<dbReference type="Pfam" id="PF00550">
    <property type="entry name" value="PP-binding"/>
    <property type="match status" value="2"/>
</dbReference>
<dbReference type="SMART" id="SM00823">
    <property type="entry name" value="PKS_PP"/>
    <property type="match status" value="2"/>
</dbReference>
<dbReference type="SUPFAM" id="SSF56801">
    <property type="entry name" value="Acetyl-CoA synthetase-like"/>
    <property type="match status" value="1"/>
</dbReference>
<dbReference type="SUPFAM" id="SSF47336">
    <property type="entry name" value="ACP-like"/>
    <property type="match status" value="2"/>
</dbReference>
<dbReference type="SUPFAM" id="SSF52777">
    <property type="entry name" value="CoA-dependent acyltransferases"/>
    <property type="match status" value="4"/>
</dbReference>
<dbReference type="PROSITE" id="PS00455">
    <property type="entry name" value="AMP_BINDING"/>
    <property type="match status" value="1"/>
</dbReference>
<dbReference type="PROSITE" id="PS50075">
    <property type="entry name" value="CARRIER"/>
    <property type="match status" value="2"/>
</dbReference>
<dbReference type="PROSITE" id="PS00012">
    <property type="entry name" value="PHOSPHOPANTETHEINE"/>
    <property type="match status" value="2"/>
</dbReference>
<protein>
    <recommendedName>
        <fullName evidence="5">Nonribosomal peptide synthetase SIDD</fullName>
        <shortName evidence="5">NPRS sidD</shortName>
        <ecNumber evidence="7">6.3.2.-</ecNumber>
    </recommendedName>
    <alternativeName>
        <fullName evidence="5">Siderophore biosynthesis cluster proteinD</fullName>
    </alternativeName>
    <alternativeName>
        <fullName evidence="5">Siderophore synthetase D</fullName>
    </alternativeName>
</protein>
<proteinExistence type="inferred from homology"/>
<sequence length="1843" mass="200508">MLSIDDHGGGGPLAVDIIPAGSGAQKTAPDAADPSLHGPGRANGDAVNADATAAEETGSRDDESQQQQQQQQQQQQQQQQQRSLLSERDLDQLWQWNAVVPETIQRCIHDIISEQAAQRPQDVAVQSWDGSLTYSELEHLSTQLALHLRLLGVDIGVTVPLCFEKSKWTVVALLAVMKAGAAFSLTDPSQPEARLQTIVEQTGAKLLVTSALQSSLGAKIAPGATVVAVSQATFDTPLQQSSDPLPDVPSSSLMYVIFTSGSTGKPKGVSISHENFTSGAIPRAEAVGYKSTSRVFDFPSYAFDVSIDCMLCTLACGGQVCVPSEQGRMNDLSGSIRDSKANMVHMTPSVARVLDSDIIPSLDVLGLGGEVVSGSDAATWRQFTHLIIGYGPSECTVGCTVNNNTSLSTGIGKGVGCVMWLVDPEDHNVLVPVGEVGELLIEGPVVGIGYLGEPAKTAEVFIEDPTWLTAGHGCYAGRHGRLYKTGDLVRYEDNLSGSIEFVGRKDQQVKIRGQRVELTEVEHHIQTCLPTGVKVVAEVIKPENASPTLVAFLAEKSSVGSQDGSLFVDPSPELSAALDKIDTTLGAKVPKYMIPAAFITLASMPTMVSMKTDRKKLREIGISIPRSKLGATHADEGPQEEPETDAEKKLAHAWQLVLASSSPVYKASSFFGLGGDSLRAMKLVSAAREQGLGLTVADIFNNPTLSAMANKSTSISSATQEQVKPFSLLQEGWDEQTARKDVAELCGIEPEQVEDVYPCTPLQEGLMALSSKVKEAYIAQRVVVLKDLETAKRLMAAYDEASRGSPILRTRIVQVPRRGLMQVVVNRKLEYTTGNNVAAYLASDRETPMDLGTALWRYAIITDEAAGTVSFVLTMHHALYDGWSMPLVVERINQAYQHPGKPLSRPSEFKDFIKYLLSQDAAESEKYWRAQLEGAHRLQFPLLPHQGYQTAADELLEEYVPLEQLPKNATVATLIRAAWAIVASQYINSTDVVFGETLTGRNAPVVGVDEIEGPMITTVPLRVPVDAEAQVGEFLQAIQEQTVGQIPHEHFGLQHIRRLSPDAREACELRAGLVLHPSADTAAPEVDATLPANNLIPHLAAREALKFNTFALMLVCSMDPKGFQVMASFDSKMVDKSTMRRALAQFKSVAQQLAQSTTTLLGNVRALSDDDAAALRDVVATAQEDPVVKTYDGASAAYIVRSDDASKMVPVGAIGELAIQTSQPKDLSTLPVPSWLAALLPPSAPTDALYLTGKLARYDAAGKIQVLGDKASLTASTDASAAARKPRVSATSQRQRRLRALWSHVLRTPETEIGLDDSFFLLGGDSISAMKLASEARPEGIRLTVAQMFSHKTLAEMAAVMECTDESSDSTAAAAAEAPIAPIAEPFELLDGLVDDKSAFLANVVKPQLQDASWTVSNVLPTRFLQELTVRATISKPRFAVRYELIFFDGPVDLRRLRQSCQRLVAHNEILRTVYVESADRIYAAVLDALETPFEEFAYTNPAVDLSTFTKDICRADVDKPQPLGSSFVKWLYVADPQRPAARSCLVFRMSHAQYDEMCLPIMLRQLSALYAHDKTPEPSVPFSAYVSHVMRTAVPASLPYWRELLAGSTITSFRPDIPITDRRHAAIAQTVDISARTRDVTLASLPTATWALCLARRRALRDVVFGEVVSGRNVGLPGAESIAGPCWQYVPLRVRFDPSWTGNDLLAFVQQQHVESAGHEAVSLREIAENCGLGWEKQASMPGDDRPAQWWFDTVCHQDVSHVKERENTDEEAQTKYETLYTDEEPLREWKVQTYVRDGGNSVVLEVVTFKSWEEHGKGLLADLVKAMEQLVHRPGEKLFSD</sequence>